<gene>
    <name evidence="1" type="primary">aroC</name>
    <name type="ordered locus">PSHAa0983</name>
</gene>
<sequence length="365" mass="39495">MAGNSIGQLFKVSTFGESHGVALGGVVDGTPAGLEITEADLQIDLDRRKPGQSRYTTQRREDDQIKILSGVFEGKTTGTSIGLLIENTDQRSKDYGKIKDVFRPGHGDYTYWHKYGLRDYRGGGRSSARETAIRVAAGSIAKKYLKQFHGIEIKACLSQLGPIKADVFDWNEVENNLFFFPDVSKLEALDEYMRGLKKQGDSVGAKVKVVASNVPVGLGEPVFDRLDAELAHSLMSINAVKGVEIGDGFDVIEQKGSEHRDELTPNGFTSNHAGGVLAGISTGQDIIASIALKPTSSITIPGNSINTENEAVEMITKGRHDPCVGIRAVPIAEAMMAITLMDHLLRQRGQNPHVHHEHGPIPGSV</sequence>
<dbReference type="EC" id="4.2.3.5" evidence="1"/>
<dbReference type="EMBL" id="CR954246">
    <property type="protein sequence ID" value="CAI86061.1"/>
    <property type="molecule type" value="Genomic_DNA"/>
</dbReference>
<dbReference type="SMR" id="Q3IJ50"/>
<dbReference type="STRING" id="326442.PSHAa0983"/>
<dbReference type="KEGG" id="pha:PSHAa0983"/>
<dbReference type="eggNOG" id="COG0082">
    <property type="taxonomic scope" value="Bacteria"/>
</dbReference>
<dbReference type="HOGENOM" id="CLU_034547_0_2_6"/>
<dbReference type="BioCyc" id="PHAL326442:PSHA_RS04795-MONOMER"/>
<dbReference type="UniPathway" id="UPA00053">
    <property type="reaction ID" value="UER00090"/>
</dbReference>
<dbReference type="Proteomes" id="UP000006843">
    <property type="component" value="Chromosome I"/>
</dbReference>
<dbReference type="GO" id="GO:0005829">
    <property type="term" value="C:cytosol"/>
    <property type="evidence" value="ECO:0007669"/>
    <property type="project" value="TreeGrafter"/>
</dbReference>
<dbReference type="GO" id="GO:0004107">
    <property type="term" value="F:chorismate synthase activity"/>
    <property type="evidence" value="ECO:0007669"/>
    <property type="project" value="UniProtKB-UniRule"/>
</dbReference>
<dbReference type="GO" id="GO:0010181">
    <property type="term" value="F:FMN binding"/>
    <property type="evidence" value="ECO:0007669"/>
    <property type="project" value="TreeGrafter"/>
</dbReference>
<dbReference type="GO" id="GO:0008652">
    <property type="term" value="P:amino acid biosynthetic process"/>
    <property type="evidence" value="ECO:0007669"/>
    <property type="project" value="UniProtKB-KW"/>
</dbReference>
<dbReference type="GO" id="GO:0009073">
    <property type="term" value="P:aromatic amino acid family biosynthetic process"/>
    <property type="evidence" value="ECO:0007669"/>
    <property type="project" value="UniProtKB-KW"/>
</dbReference>
<dbReference type="GO" id="GO:0009423">
    <property type="term" value="P:chorismate biosynthetic process"/>
    <property type="evidence" value="ECO:0007669"/>
    <property type="project" value="UniProtKB-UniRule"/>
</dbReference>
<dbReference type="CDD" id="cd07304">
    <property type="entry name" value="Chorismate_synthase"/>
    <property type="match status" value="1"/>
</dbReference>
<dbReference type="FunFam" id="3.60.150.10:FF:000001">
    <property type="entry name" value="Chorismate synthase"/>
    <property type="match status" value="1"/>
</dbReference>
<dbReference type="Gene3D" id="3.60.150.10">
    <property type="entry name" value="Chorismate synthase AroC"/>
    <property type="match status" value="1"/>
</dbReference>
<dbReference type="HAMAP" id="MF_00300">
    <property type="entry name" value="Chorismate_synth"/>
    <property type="match status" value="1"/>
</dbReference>
<dbReference type="InterPro" id="IPR000453">
    <property type="entry name" value="Chorismate_synth"/>
</dbReference>
<dbReference type="InterPro" id="IPR035904">
    <property type="entry name" value="Chorismate_synth_AroC_sf"/>
</dbReference>
<dbReference type="InterPro" id="IPR020541">
    <property type="entry name" value="Chorismate_synthase_CS"/>
</dbReference>
<dbReference type="NCBIfam" id="TIGR00033">
    <property type="entry name" value="aroC"/>
    <property type="match status" value="1"/>
</dbReference>
<dbReference type="NCBIfam" id="NF003793">
    <property type="entry name" value="PRK05382.1"/>
    <property type="match status" value="1"/>
</dbReference>
<dbReference type="PANTHER" id="PTHR21085">
    <property type="entry name" value="CHORISMATE SYNTHASE"/>
    <property type="match status" value="1"/>
</dbReference>
<dbReference type="PANTHER" id="PTHR21085:SF0">
    <property type="entry name" value="CHORISMATE SYNTHASE"/>
    <property type="match status" value="1"/>
</dbReference>
<dbReference type="Pfam" id="PF01264">
    <property type="entry name" value="Chorismate_synt"/>
    <property type="match status" value="1"/>
</dbReference>
<dbReference type="PIRSF" id="PIRSF001456">
    <property type="entry name" value="Chorismate_synth"/>
    <property type="match status" value="1"/>
</dbReference>
<dbReference type="SUPFAM" id="SSF103263">
    <property type="entry name" value="Chorismate synthase, AroC"/>
    <property type="match status" value="1"/>
</dbReference>
<dbReference type="PROSITE" id="PS00787">
    <property type="entry name" value="CHORISMATE_SYNTHASE_1"/>
    <property type="match status" value="1"/>
</dbReference>
<dbReference type="PROSITE" id="PS00788">
    <property type="entry name" value="CHORISMATE_SYNTHASE_2"/>
    <property type="match status" value="1"/>
</dbReference>
<dbReference type="PROSITE" id="PS00789">
    <property type="entry name" value="CHORISMATE_SYNTHASE_3"/>
    <property type="match status" value="1"/>
</dbReference>
<keyword id="KW-0028">Amino-acid biosynthesis</keyword>
<keyword id="KW-0057">Aromatic amino acid biosynthesis</keyword>
<keyword id="KW-0274">FAD</keyword>
<keyword id="KW-0285">Flavoprotein</keyword>
<keyword id="KW-0288">FMN</keyword>
<keyword id="KW-0456">Lyase</keyword>
<keyword id="KW-0521">NADP</keyword>
<keyword id="KW-1185">Reference proteome</keyword>
<name>AROC_PSET1</name>
<reference key="1">
    <citation type="journal article" date="2005" name="Genome Res.">
        <title>Coping with cold: the genome of the versatile marine Antarctica bacterium Pseudoalteromonas haloplanktis TAC125.</title>
        <authorList>
            <person name="Medigue C."/>
            <person name="Krin E."/>
            <person name="Pascal G."/>
            <person name="Barbe V."/>
            <person name="Bernsel A."/>
            <person name="Bertin P.N."/>
            <person name="Cheung F."/>
            <person name="Cruveiller S."/>
            <person name="D'Amico S."/>
            <person name="Duilio A."/>
            <person name="Fang G."/>
            <person name="Feller G."/>
            <person name="Ho C."/>
            <person name="Mangenot S."/>
            <person name="Marino G."/>
            <person name="Nilsson J."/>
            <person name="Parrilli E."/>
            <person name="Rocha E.P.C."/>
            <person name="Rouy Z."/>
            <person name="Sekowska A."/>
            <person name="Tutino M.L."/>
            <person name="Vallenet D."/>
            <person name="von Heijne G."/>
            <person name="Danchin A."/>
        </authorList>
    </citation>
    <scope>NUCLEOTIDE SEQUENCE [LARGE SCALE GENOMIC DNA]</scope>
    <source>
        <strain>TAC 125</strain>
    </source>
</reference>
<accession>Q3IJ50</accession>
<evidence type="ECO:0000255" key="1">
    <source>
        <dbReference type="HAMAP-Rule" id="MF_00300"/>
    </source>
</evidence>
<comment type="function">
    <text evidence="1">Catalyzes the anti-1,4-elimination of the C-3 phosphate and the C-6 proR hydrogen from 5-enolpyruvylshikimate-3-phosphate (EPSP) to yield chorismate, which is the branch point compound that serves as the starting substrate for the three terminal pathways of aromatic amino acid biosynthesis. This reaction introduces a second double bond into the aromatic ring system.</text>
</comment>
<comment type="catalytic activity">
    <reaction evidence="1">
        <text>5-O-(1-carboxyvinyl)-3-phosphoshikimate = chorismate + phosphate</text>
        <dbReference type="Rhea" id="RHEA:21020"/>
        <dbReference type="ChEBI" id="CHEBI:29748"/>
        <dbReference type="ChEBI" id="CHEBI:43474"/>
        <dbReference type="ChEBI" id="CHEBI:57701"/>
        <dbReference type="EC" id="4.2.3.5"/>
    </reaction>
</comment>
<comment type="cofactor">
    <cofactor evidence="1">
        <name>FMNH2</name>
        <dbReference type="ChEBI" id="CHEBI:57618"/>
    </cofactor>
    <text evidence="1">Reduced FMN (FMNH(2)).</text>
</comment>
<comment type="pathway">
    <text evidence="1">Metabolic intermediate biosynthesis; chorismate biosynthesis; chorismate from D-erythrose 4-phosphate and phosphoenolpyruvate: step 7/7.</text>
</comment>
<comment type="subunit">
    <text evidence="1">Homotetramer.</text>
</comment>
<comment type="similarity">
    <text evidence="1">Belongs to the chorismate synthase family.</text>
</comment>
<feature type="chain" id="PRO_0000256317" description="Chorismate synthase">
    <location>
        <begin position="1"/>
        <end position="365"/>
    </location>
</feature>
<feature type="binding site" evidence="1">
    <location>
        <position position="48"/>
    </location>
    <ligand>
        <name>NADP(+)</name>
        <dbReference type="ChEBI" id="CHEBI:58349"/>
    </ligand>
</feature>
<feature type="binding site" evidence="1">
    <location>
        <position position="54"/>
    </location>
    <ligand>
        <name>NADP(+)</name>
        <dbReference type="ChEBI" id="CHEBI:58349"/>
    </ligand>
</feature>
<feature type="binding site" evidence="1">
    <location>
        <begin position="125"/>
        <end position="127"/>
    </location>
    <ligand>
        <name>FMN</name>
        <dbReference type="ChEBI" id="CHEBI:58210"/>
    </ligand>
</feature>
<feature type="binding site" evidence="1">
    <location>
        <begin position="238"/>
        <end position="239"/>
    </location>
    <ligand>
        <name>FMN</name>
        <dbReference type="ChEBI" id="CHEBI:58210"/>
    </ligand>
</feature>
<feature type="binding site" evidence="1">
    <location>
        <position position="278"/>
    </location>
    <ligand>
        <name>FMN</name>
        <dbReference type="ChEBI" id="CHEBI:58210"/>
    </ligand>
</feature>
<feature type="binding site" evidence="1">
    <location>
        <begin position="293"/>
        <end position="297"/>
    </location>
    <ligand>
        <name>FMN</name>
        <dbReference type="ChEBI" id="CHEBI:58210"/>
    </ligand>
</feature>
<feature type="binding site" evidence="1">
    <location>
        <position position="319"/>
    </location>
    <ligand>
        <name>FMN</name>
        <dbReference type="ChEBI" id="CHEBI:58210"/>
    </ligand>
</feature>
<protein>
    <recommendedName>
        <fullName evidence="1">Chorismate synthase</fullName>
        <shortName evidence="1">CS</shortName>
        <ecNumber evidence="1">4.2.3.5</ecNumber>
    </recommendedName>
    <alternativeName>
        <fullName evidence="1">5-enolpyruvylshikimate-3-phosphate phospholyase</fullName>
    </alternativeName>
</protein>
<organism>
    <name type="scientific">Pseudoalteromonas translucida (strain TAC 125)</name>
    <dbReference type="NCBI Taxonomy" id="326442"/>
    <lineage>
        <taxon>Bacteria</taxon>
        <taxon>Pseudomonadati</taxon>
        <taxon>Pseudomonadota</taxon>
        <taxon>Gammaproteobacteria</taxon>
        <taxon>Alteromonadales</taxon>
        <taxon>Pseudoalteromonadaceae</taxon>
        <taxon>Pseudoalteromonas</taxon>
    </lineage>
</organism>
<proteinExistence type="inferred from homology"/>